<sequence length="275" mass="31551">MERKEQTMTFYSPEVIKIKGDLRYQRPTLPTNQQSVSTQKRQQYVNEACTYIRMFCGSLSGFSVLLLACTSPLNLVQFLVNNNGLELKAGLWTLCYHELCWSHTPKPPYYLQYSRALFLISILFMLISLGLLLSSCRPAERMMSAELDLKVSMLSFCSAVSLLLCLNLFLAQVELYTKNAMEYEFLWTYYLSWCSEVLYICVGIISFLNFITFQFHPPDEGVSADLWQKSRLGIGPVPKTLSATAERSRSEMQFLSGRQEKLQNVRKGKLATTRL</sequence>
<comment type="subcellular location">
    <subcellularLocation>
        <location evidence="2">Membrane</location>
        <topology evidence="2">Multi-pass membrane protein</topology>
    </subcellularLocation>
</comment>
<reference key="1">
    <citation type="journal article" date="2004" name="Genome Res.">
        <title>The status, quality, and expansion of the NIH full-length cDNA project: the Mammalian Gene Collection (MGC).</title>
        <authorList>
            <consortium name="The MGC Project Team"/>
        </authorList>
    </citation>
    <scope>NUCLEOTIDE SEQUENCE [LARGE SCALE MRNA]</scope>
    <source>
        <tissue>Brain</tissue>
        <tissue>Testis</tissue>
    </source>
</reference>
<evidence type="ECO:0000255" key="1"/>
<evidence type="ECO:0000305" key="2"/>
<gene>
    <name type="primary">Tmem202</name>
</gene>
<name>TM202_MOUSE</name>
<feature type="chain" id="PRO_0000317202" description="Transmembrane protein 202">
    <location>
        <begin position="1"/>
        <end position="275"/>
    </location>
</feature>
<feature type="transmembrane region" description="Helical" evidence="1">
    <location>
        <begin position="60"/>
        <end position="80"/>
    </location>
</feature>
<feature type="transmembrane region" description="Helical" evidence="1">
    <location>
        <begin position="116"/>
        <end position="136"/>
    </location>
</feature>
<feature type="transmembrane region" description="Helical" evidence="1">
    <location>
        <begin position="151"/>
        <end position="171"/>
    </location>
</feature>
<feature type="transmembrane region" description="Helical" evidence="1">
    <location>
        <begin position="193"/>
        <end position="213"/>
    </location>
</feature>
<keyword id="KW-0472">Membrane</keyword>
<keyword id="KW-1185">Reference proteome</keyword>
<keyword id="KW-0812">Transmembrane</keyword>
<keyword id="KW-1133">Transmembrane helix</keyword>
<organism>
    <name type="scientific">Mus musculus</name>
    <name type="common">Mouse</name>
    <dbReference type="NCBI Taxonomy" id="10090"/>
    <lineage>
        <taxon>Eukaryota</taxon>
        <taxon>Metazoa</taxon>
        <taxon>Chordata</taxon>
        <taxon>Craniata</taxon>
        <taxon>Vertebrata</taxon>
        <taxon>Euteleostomi</taxon>
        <taxon>Mammalia</taxon>
        <taxon>Eutheria</taxon>
        <taxon>Euarchontoglires</taxon>
        <taxon>Glires</taxon>
        <taxon>Rodentia</taxon>
        <taxon>Myomorpha</taxon>
        <taxon>Muroidea</taxon>
        <taxon>Muridae</taxon>
        <taxon>Murinae</taxon>
        <taxon>Mus</taxon>
        <taxon>Mus</taxon>
    </lineage>
</organism>
<accession>Q80W35</accession>
<proteinExistence type="evidence at transcript level"/>
<dbReference type="EMBL" id="BC049695">
    <property type="protein sequence ID" value="AAH49695.1"/>
    <property type="molecule type" value="mRNA"/>
</dbReference>
<dbReference type="EMBL" id="BC132482">
    <property type="protein sequence ID" value="AAI32483.1"/>
    <property type="molecule type" value="mRNA"/>
</dbReference>
<dbReference type="CCDS" id="CCDS23249.1"/>
<dbReference type="RefSeq" id="NP_848475.1">
    <property type="nucleotide sequence ID" value="NM_178388.3"/>
</dbReference>
<dbReference type="SMR" id="Q80W35"/>
<dbReference type="FunCoup" id="Q80W35">
    <property type="interactions" value="379"/>
</dbReference>
<dbReference type="STRING" id="10090.ENSMUSP00000053782"/>
<dbReference type="PhosphoSitePlus" id="Q80W35"/>
<dbReference type="PaxDb" id="10090-ENSMUSP00000053782"/>
<dbReference type="Ensembl" id="ENSMUST00000055345.9">
    <property type="protein sequence ID" value="ENSMUSP00000053782.7"/>
    <property type="gene ID" value="ENSMUSG00000049526.9"/>
</dbReference>
<dbReference type="GeneID" id="73893"/>
<dbReference type="KEGG" id="mmu:73893"/>
<dbReference type="UCSC" id="uc009pxv.1">
    <property type="organism name" value="mouse"/>
</dbReference>
<dbReference type="AGR" id="MGI:1921143"/>
<dbReference type="CTD" id="338949"/>
<dbReference type="MGI" id="MGI:1921143">
    <property type="gene designation" value="Tmem202"/>
</dbReference>
<dbReference type="VEuPathDB" id="HostDB:ENSMUSG00000049526"/>
<dbReference type="eggNOG" id="ENOG502R1C0">
    <property type="taxonomic scope" value="Eukaryota"/>
</dbReference>
<dbReference type="GeneTree" id="ENSGT00940000163538"/>
<dbReference type="HOGENOM" id="CLU_093889_0_0_1"/>
<dbReference type="InParanoid" id="Q80W35"/>
<dbReference type="OMA" id="CMSPLNW"/>
<dbReference type="OrthoDB" id="9446743at2759"/>
<dbReference type="PhylomeDB" id="Q80W35"/>
<dbReference type="TreeFam" id="TF337324"/>
<dbReference type="BioGRID-ORCS" id="73893">
    <property type="hits" value="1 hit in 76 CRISPR screens"/>
</dbReference>
<dbReference type="ChiTaRS" id="Tmem202">
    <property type="organism name" value="mouse"/>
</dbReference>
<dbReference type="PRO" id="PR:Q80W35"/>
<dbReference type="Proteomes" id="UP000000589">
    <property type="component" value="Chromosome 9"/>
</dbReference>
<dbReference type="RNAct" id="Q80W35">
    <property type="molecule type" value="protein"/>
</dbReference>
<dbReference type="Bgee" id="ENSMUSG00000049526">
    <property type="expression patterns" value="Expressed in spermatid and 47 other cell types or tissues"/>
</dbReference>
<dbReference type="ExpressionAtlas" id="Q80W35">
    <property type="expression patterns" value="baseline and differential"/>
</dbReference>
<dbReference type="GO" id="GO:0016020">
    <property type="term" value="C:membrane"/>
    <property type="evidence" value="ECO:0007669"/>
    <property type="project" value="UniProtKB-SubCell"/>
</dbReference>
<dbReference type="FunFam" id="1.20.140.150:FF:000041">
    <property type="entry name" value="Transmembrane protein 202"/>
    <property type="match status" value="1"/>
</dbReference>
<dbReference type="Gene3D" id="1.20.140.150">
    <property type="match status" value="1"/>
</dbReference>
<dbReference type="InterPro" id="IPR050579">
    <property type="entry name" value="PMP-22/EMP/MP20-like"/>
</dbReference>
<dbReference type="InterPro" id="IPR004031">
    <property type="entry name" value="PMP22/EMP/MP20/Claudin"/>
</dbReference>
<dbReference type="PANTHER" id="PTHR10671">
    <property type="entry name" value="EPITHELIAL MEMBRANE PROTEIN-RELATED"/>
    <property type="match status" value="1"/>
</dbReference>
<dbReference type="PANTHER" id="PTHR10671:SF42">
    <property type="entry name" value="TRANSMEMBRANE PROTEIN 202"/>
    <property type="match status" value="1"/>
</dbReference>
<dbReference type="Pfam" id="PF00822">
    <property type="entry name" value="PMP22_Claudin"/>
    <property type="match status" value="1"/>
</dbReference>
<protein>
    <recommendedName>
        <fullName>Transmembrane protein 202</fullName>
    </recommendedName>
</protein>